<protein>
    <recommendedName>
        <fullName evidence="4">Forkhead box protein L3</fullName>
    </recommendedName>
</protein>
<dbReference type="EMBL" id="AC187653">
    <property type="status" value="NOT_ANNOTATED_CDS"/>
    <property type="molecule type" value="Genomic_DNA"/>
</dbReference>
<dbReference type="RefSeq" id="NP_001361767.1">
    <property type="nucleotide sequence ID" value="NM_001374838.1"/>
</dbReference>
<dbReference type="RefSeq" id="XP_011513358.1">
    <property type="nucleotide sequence ID" value="XM_011515056.1"/>
</dbReference>
<dbReference type="SMR" id="A0A1W2PRP0"/>
<dbReference type="STRING" id="9606.ENSP00000492766"/>
<dbReference type="BioMuta" id="ENSG00000248767"/>
<dbReference type="PeptideAtlas" id="A0A1W2PRP0"/>
<dbReference type="Ensembl" id="ENST00000506382.2">
    <property type="protein sequence ID" value="ENSP00000492766.1"/>
    <property type="gene ID" value="ENSG00000248767.2"/>
</dbReference>
<dbReference type="GeneID" id="116033993"/>
<dbReference type="MANE-Select" id="ENST00000506382.2">
    <property type="protein sequence ID" value="ENSP00000492766.1"/>
    <property type="RefSeq nucleotide sequence ID" value="NM_001374838.1"/>
    <property type="RefSeq protein sequence ID" value="NP_001361767.1"/>
</dbReference>
<dbReference type="AGR" id="HGNC:54201"/>
<dbReference type="AGR" id="HGNC:54640"/>
<dbReference type="GeneCards" id="FOXL3"/>
<dbReference type="HGNC" id="HGNC:54201">
    <property type="gene designation" value="FOXL3"/>
</dbReference>
<dbReference type="HPA" id="ENSG00000248767">
    <property type="expression patterns" value="Tissue enriched (testis)"/>
</dbReference>
<dbReference type="neXtProt" id="NX_A0A1W2PRP0"/>
<dbReference type="VEuPathDB" id="HostDB:ENSG00000248767"/>
<dbReference type="GeneTree" id="ENSGT00940000162800"/>
<dbReference type="InParanoid" id="A0A1W2PRP0"/>
<dbReference type="OMA" id="RTEGHDK"/>
<dbReference type="OrthoDB" id="9926427at2759"/>
<dbReference type="PAN-GO" id="A0A1W2PRP0">
    <property type="GO annotations" value="5 GO annotations based on evolutionary models"/>
</dbReference>
<dbReference type="SignaLink" id="A0A1W2PRP0"/>
<dbReference type="GenomeRNAi" id="100288524"/>
<dbReference type="PRO" id="PR:A0A1W2PRP0"/>
<dbReference type="Proteomes" id="UP000005640">
    <property type="component" value="Chromosome 7"/>
</dbReference>
<dbReference type="RNAct" id="A0A1W2PRP0">
    <property type="molecule type" value="protein"/>
</dbReference>
<dbReference type="Bgee" id="ENSG00000248767">
    <property type="expression patterns" value="Expressed in right testis and 30 other cell types or tissues"/>
</dbReference>
<dbReference type="ExpressionAtlas" id="A0A1W2PRP0">
    <property type="expression patterns" value="baseline and differential"/>
</dbReference>
<dbReference type="GO" id="GO:0005634">
    <property type="term" value="C:nucleus"/>
    <property type="evidence" value="ECO:0007669"/>
    <property type="project" value="UniProtKB-SubCell"/>
</dbReference>
<dbReference type="GO" id="GO:0000981">
    <property type="term" value="F:DNA-binding transcription factor activity, RNA polymerase II-specific"/>
    <property type="evidence" value="ECO:0000318"/>
    <property type="project" value="GO_Central"/>
</dbReference>
<dbReference type="GO" id="GO:0000978">
    <property type="term" value="F:RNA polymerase II cis-regulatory region sequence-specific DNA binding"/>
    <property type="evidence" value="ECO:0000318"/>
    <property type="project" value="GO_Central"/>
</dbReference>
<dbReference type="GO" id="GO:0009653">
    <property type="term" value="P:anatomical structure morphogenesis"/>
    <property type="evidence" value="ECO:0000318"/>
    <property type="project" value="GO_Central"/>
</dbReference>
<dbReference type="GO" id="GO:0030154">
    <property type="term" value="P:cell differentiation"/>
    <property type="evidence" value="ECO:0000318"/>
    <property type="project" value="GO_Central"/>
</dbReference>
<dbReference type="GO" id="GO:0006357">
    <property type="term" value="P:regulation of transcription by RNA polymerase II"/>
    <property type="evidence" value="ECO:0000318"/>
    <property type="project" value="GO_Central"/>
</dbReference>
<dbReference type="FunFam" id="1.10.10.10:FF:000266">
    <property type="entry name" value="Forkhead box protein L1"/>
    <property type="match status" value="1"/>
</dbReference>
<dbReference type="Gene3D" id="1.10.10.10">
    <property type="entry name" value="Winged helix-like DNA-binding domain superfamily/Winged helix DNA-binding domain"/>
    <property type="match status" value="1"/>
</dbReference>
<dbReference type="InterPro" id="IPR001766">
    <property type="entry name" value="Fork_head_dom"/>
</dbReference>
<dbReference type="InterPro" id="IPR050211">
    <property type="entry name" value="FOX_domain-containing"/>
</dbReference>
<dbReference type="InterPro" id="IPR030456">
    <property type="entry name" value="TF_fork_head_CS_2"/>
</dbReference>
<dbReference type="InterPro" id="IPR036388">
    <property type="entry name" value="WH-like_DNA-bd_sf"/>
</dbReference>
<dbReference type="InterPro" id="IPR036390">
    <property type="entry name" value="WH_DNA-bd_sf"/>
</dbReference>
<dbReference type="PANTHER" id="PTHR11829">
    <property type="entry name" value="FORKHEAD BOX PROTEIN"/>
    <property type="match status" value="1"/>
</dbReference>
<dbReference type="PANTHER" id="PTHR11829:SF211">
    <property type="entry name" value="FORKHEAD BOX PROTEIN L3"/>
    <property type="match status" value="1"/>
</dbReference>
<dbReference type="Pfam" id="PF00250">
    <property type="entry name" value="Forkhead"/>
    <property type="match status" value="1"/>
</dbReference>
<dbReference type="PRINTS" id="PR00053">
    <property type="entry name" value="FORKHEAD"/>
</dbReference>
<dbReference type="SMART" id="SM00339">
    <property type="entry name" value="FH"/>
    <property type="match status" value="1"/>
</dbReference>
<dbReference type="SUPFAM" id="SSF46785">
    <property type="entry name" value="Winged helix' DNA-binding domain"/>
    <property type="match status" value="1"/>
</dbReference>
<dbReference type="PROSITE" id="PS00658">
    <property type="entry name" value="FORK_HEAD_2"/>
    <property type="match status" value="1"/>
</dbReference>
<dbReference type="PROSITE" id="PS50039">
    <property type="entry name" value="FORK_HEAD_3"/>
    <property type="match status" value="1"/>
</dbReference>
<evidence type="ECO:0000250" key="1">
    <source>
        <dbReference type="UniProtKB" id="Q12952"/>
    </source>
</evidence>
<evidence type="ECO:0000255" key="2">
    <source>
        <dbReference type="PROSITE-ProRule" id="PRU00089"/>
    </source>
</evidence>
<evidence type="ECO:0000256" key="3">
    <source>
        <dbReference type="SAM" id="MobiDB-lite"/>
    </source>
</evidence>
<evidence type="ECO:0000305" key="4"/>
<evidence type="ECO:0000312" key="5">
    <source>
        <dbReference type="HGNC" id="HGNC:54201"/>
    </source>
</evidence>
<feature type="chain" id="PRO_0000450370" description="Forkhead box protein L3">
    <location>
        <begin position="1"/>
        <end position="233"/>
    </location>
</feature>
<feature type="DNA-binding region" description="Fork-head" evidence="2">
    <location>
        <begin position="32"/>
        <end position="130"/>
    </location>
</feature>
<feature type="region of interest" description="Disordered" evidence="3">
    <location>
        <begin position="125"/>
        <end position="198"/>
    </location>
</feature>
<feature type="compositionally biased region" description="Basic residues" evidence="3">
    <location>
        <begin position="125"/>
        <end position="134"/>
    </location>
</feature>
<feature type="compositionally biased region" description="Pro residues" evidence="3">
    <location>
        <begin position="175"/>
        <end position="184"/>
    </location>
</feature>
<feature type="compositionally biased region" description="Basic and acidic residues" evidence="3">
    <location>
        <begin position="185"/>
        <end position="194"/>
    </location>
</feature>
<comment type="function">
    <text evidence="1">Probable transcriptional regulator.</text>
</comment>
<comment type="subcellular location">
    <subcellularLocation>
        <location evidence="2">Nucleus</location>
    </subcellularLocation>
</comment>
<accession>A0A1W2PRP0</accession>
<reference key="1">
    <citation type="journal article" date="2003" name="Nature">
        <title>The DNA sequence of human chromosome 7.</title>
        <authorList>
            <person name="Hillier L.W."/>
            <person name="Fulton R.S."/>
            <person name="Fulton L.A."/>
            <person name="Graves T.A."/>
            <person name="Pepin K.H."/>
            <person name="Wagner-McPherson C."/>
            <person name="Layman D."/>
            <person name="Maas J."/>
            <person name="Jaeger S."/>
            <person name="Walker R."/>
            <person name="Wylie K."/>
            <person name="Sekhon M."/>
            <person name="Becker M.C."/>
            <person name="O'Laughlin M.D."/>
            <person name="Schaller M.E."/>
            <person name="Fewell G.A."/>
            <person name="Delehaunty K.D."/>
            <person name="Miner T.L."/>
            <person name="Nash W.E."/>
            <person name="Cordes M."/>
            <person name="Du H."/>
            <person name="Sun H."/>
            <person name="Edwards J."/>
            <person name="Bradshaw-Cordum H."/>
            <person name="Ali J."/>
            <person name="Andrews S."/>
            <person name="Isak A."/>
            <person name="Vanbrunt A."/>
            <person name="Nguyen C."/>
            <person name="Du F."/>
            <person name="Lamar B."/>
            <person name="Courtney L."/>
            <person name="Kalicki J."/>
            <person name="Ozersky P."/>
            <person name="Bielicki L."/>
            <person name="Scott K."/>
            <person name="Holmes A."/>
            <person name="Harkins R."/>
            <person name="Harris A."/>
            <person name="Strong C.M."/>
            <person name="Hou S."/>
            <person name="Tomlinson C."/>
            <person name="Dauphin-Kohlberg S."/>
            <person name="Kozlowicz-Reilly A."/>
            <person name="Leonard S."/>
            <person name="Rohlfing T."/>
            <person name="Rock S.M."/>
            <person name="Tin-Wollam A.-M."/>
            <person name="Abbott A."/>
            <person name="Minx P."/>
            <person name="Maupin R."/>
            <person name="Strowmatt C."/>
            <person name="Latreille P."/>
            <person name="Miller N."/>
            <person name="Johnson D."/>
            <person name="Murray J."/>
            <person name="Woessner J.P."/>
            <person name="Wendl M.C."/>
            <person name="Yang S.-P."/>
            <person name="Schultz B.R."/>
            <person name="Wallis J.W."/>
            <person name="Spieth J."/>
            <person name="Bieri T.A."/>
            <person name="Nelson J.O."/>
            <person name="Berkowicz N."/>
            <person name="Wohldmann P.E."/>
            <person name="Cook L.L."/>
            <person name="Hickenbotham M.T."/>
            <person name="Eldred J."/>
            <person name="Williams D."/>
            <person name="Bedell J.A."/>
            <person name="Mardis E.R."/>
            <person name="Clifton S.W."/>
            <person name="Chissoe S.L."/>
            <person name="Marra M.A."/>
            <person name="Raymond C."/>
            <person name="Haugen E."/>
            <person name="Gillett W."/>
            <person name="Zhou Y."/>
            <person name="James R."/>
            <person name="Phelps K."/>
            <person name="Iadanoto S."/>
            <person name="Bubb K."/>
            <person name="Simms E."/>
            <person name="Levy R."/>
            <person name="Clendenning J."/>
            <person name="Kaul R."/>
            <person name="Kent W.J."/>
            <person name="Furey T.S."/>
            <person name="Baertsch R.A."/>
            <person name="Brent M.R."/>
            <person name="Keibler E."/>
            <person name="Flicek P."/>
            <person name="Bork P."/>
            <person name="Suyama M."/>
            <person name="Bailey J.A."/>
            <person name="Portnoy M.E."/>
            <person name="Torrents D."/>
            <person name="Chinwalla A.T."/>
            <person name="Gish W.R."/>
            <person name="Eddy S.R."/>
            <person name="McPherson J.D."/>
            <person name="Olson M.V."/>
            <person name="Eichler E.E."/>
            <person name="Green E.D."/>
            <person name="Waterston R.H."/>
            <person name="Wilson R.K."/>
        </authorList>
    </citation>
    <scope>NUCLEOTIDE SEQUENCE [LARGE SCALE GENOMIC DNA]</scope>
</reference>
<proteinExistence type="inferred from homology"/>
<organism>
    <name type="scientific">Homo sapiens</name>
    <name type="common">Human</name>
    <dbReference type="NCBI Taxonomy" id="9606"/>
    <lineage>
        <taxon>Eukaryota</taxon>
        <taxon>Metazoa</taxon>
        <taxon>Chordata</taxon>
        <taxon>Craniata</taxon>
        <taxon>Vertebrata</taxon>
        <taxon>Euteleostomi</taxon>
        <taxon>Mammalia</taxon>
        <taxon>Eutheria</taxon>
        <taxon>Euarchontoglires</taxon>
        <taxon>Primates</taxon>
        <taxon>Haplorrhini</taxon>
        <taxon>Catarrhini</taxon>
        <taxon>Hominidae</taxon>
        <taxon>Homo</taxon>
    </lineage>
</organism>
<sequence length="233" mass="25969">MFDSSQYPYNCFNYDADDYPAGSSDEDKRLTRPAYSYIALIAMAIQQSPAGRVTLSGIYDFIMRKFPYYRANQRAWQNSIRHNLSLNSCFVKVPRSEGHEKGKGNYWTFAGGCESLLDLFENGNYRRRRRRRGPKREGPRGPRAGGAQGPSGPSEPPAAQGRLAPDSAGEGAPGREPPASPAPPGKEHPRDLKFSIDYILSSPDPFPGLKPPCLAQEGRYPRLENVGLHFWTM</sequence>
<keyword id="KW-0238">DNA-binding</keyword>
<keyword id="KW-0539">Nucleus</keyword>
<keyword id="KW-1185">Reference proteome</keyword>
<keyword id="KW-0804">Transcription</keyword>
<name>FOXL3_HUMAN</name>
<gene>
    <name evidence="5" type="primary">FOXL3</name>
</gene>